<reference key="1">
    <citation type="journal article" date="2007" name="J. Exp. Bot.">
        <title>Localization and domain characterization of Arabidopsis golgin candidates.</title>
        <authorList>
            <person name="Latijnhouwers M."/>
            <person name="Gillespie T."/>
            <person name="Boevink P."/>
            <person name="Kriechbaumer V."/>
            <person name="Hawes C."/>
            <person name="Carvalho C.M."/>
        </authorList>
    </citation>
    <scope>NUCLEOTIDE SEQUENCE [MRNA]</scope>
    <scope>SUBCELLULAR LOCATION</scope>
    <scope>GENE FAMILY</scope>
    <scope>NOMENCLATURE</scope>
</reference>
<reference key="2">
    <citation type="journal article" date="2000" name="DNA Res.">
        <title>Structural analysis of Arabidopsis thaliana chromosome 3. I. Sequence features of the regions of 4,504,864 bp covered by sixty P1 and TAC clones.</title>
        <authorList>
            <person name="Sato S."/>
            <person name="Nakamura Y."/>
            <person name="Kaneko T."/>
            <person name="Katoh T."/>
            <person name="Asamizu E."/>
            <person name="Tabata S."/>
        </authorList>
    </citation>
    <scope>NUCLEOTIDE SEQUENCE [LARGE SCALE GENOMIC DNA]</scope>
    <source>
        <strain>cv. Columbia</strain>
    </source>
</reference>
<reference key="3">
    <citation type="journal article" date="2017" name="Plant J.">
        <title>Araport11: a complete reannotation of the Arabidopsis thaliana reference genome.</title>
        <authorList>
            <person name="Cheng C.Y."/>
            <person name="Krishnakumar V."/>
            <person name="Chan A.P."/>
            <person name="Thibaud-Nissen F."/>
            <person name="Schobel S."/>
            <person name="Town C.D."/>
        </authorList>
    </citation>
    <scope>GENOME REANNOTATION</scope>
    <source>
        <strain>cv. Columbia</strain>
    </source>
</reference>
<reference key="4">
    <citation type="journal article" date="2003" name="Science">
        <title>Empirical analysis of transcriptional activity in the Arabidopsis genome.</title>
        <authorList>
            <person name="Yamada K."/>
            <person name="Lim J."/>
            <person name="Dale J.M."/>
            <person name="Chen H."/>
            <person name="Shinn P."/>
            <person name="Palm C.J."/>
            <person name="Southwick A.M."/>
            <person name="Wu H.C."/>
            <person name="Kim C.J."/>
            <person name="Nguyen M."/>
            <person name="Pham P.K."/>
            <person name="Cheuk R.F."/>
            <person name="Karlin-Newmann G."/>
            <person name="Liu S.X."/>
            <person name="Lam B."/>
            <person name="Sakano H."/>
            <person name="Wu T."/>
            <person name="Yu G."/>
            <person name="Miranda M."/>
            <person name="Quach H.L."/>
            <person name="Tripp M."/>
            <person name="Chang C.H."/>
            <person name="Lee J.M."/>
            <person name="Toriumi M.J."/>
            <person name="Chan M.M."/>
            <person name="Tang C.C."/>
            <person name="Onodera C.S."/>
            <person name="Deng J.M."/>
            <person name="Akiyama K."/>
            <person name="Ansari Y."/>
            <person name="Arakawa T."/>
            <person name="Banh J."/>
            <person name="Banno F."/>
            <person name="Bowser L."/>
            <person name="Brooks S.Y."/>
            <person name="Carninci P."/>
            <person name="Chao Q."/>
            <person name="Choy N."/>
            <person name="Enju A."/>
            <person name="Goldsmith A.D."/>
            <person name="Gurjal M."/>
            <person name="Hansen N.F."/>
            <person name="Hayashizaki Y."/>
            <person name="Johnson-Hopson C."/>
            <person name="Hsuan V.W."/>
            <person name="Iida K."/>
            <person name="Karnes M."/>
            <person name="Khan S."/>
            <person name="Koesema E."/>
            <person name="Ishida J."/>
            <person name="Jiang P.X."/>
            <person name="Jones T."/>
            <person name="Kawai J."/>
            <person name="Kamiya A."/>
            <person name="Meyers C."/>
            <person name="Nakajima M."/>
            <person name="Narusaka M."/>
            <person name="Seki M."/>
            <person name="Sakurai T."/>
            <person name="Satou M."/>
            <person name="Tamse R."/>
            <person name="Vaysberg M."/>
            <person name="Wallender E.K."/>
            <person name="Wong C."/>
            <person name="Yamamura Y."/>
            <person name="Yuan S."/>
            <person name="Shinozaki K."/>
            <person name="Davis R.W."/>
            <person name="Theologis A."/>
            <person name="Ecker J.R."/>
        </authorList>
    </citation>
    <scope>NUCLEOTIDE SEQUENCE [LARGE SCALE MRNA] OF 192-914</scope>
    <source>
        <strain>cv. Columbia</strain>
    </source>
</reference>
<reference key="5">
    <citation type="journal article" date="2008" name="J. Proteome Res.">
        <title>Site-specific phosphorylation profiling of Arabidopsis proteins by mass spectrometry and peptide chip analysis.</title>
        <authorList>
            <person name="de la Fuente van Bentem S."/>
            <person name="Anrather D."/>
            <person name="Dohnal I."/>
            <person name="Roitinger E."/>
            <person name="Csaszar E."/>
            <person name="Joore J."/>
            <person name="Buijnink J."/>
            <person name="Carreri A."/>
            <person name="Forzani C."/>
            <person name="Lorkovic Z.J."/>
            <person name="Barta A."/>
            <person name="Lecourieux D."/>
            <person name="Verhounig A."/>
            <person name="Jonak C."/>
            <person name="Hirt H."/>
        </authorList>
    </citation>
    <scope>PHOSPHORYLATION [LARGE SCALE ANALYSIS] AT SER-911</scope>
    <scope>IDENTIFICATION BY MASS SPECTROMETRY [LARGE SCALE ANALYSIS]</scope>
    <source>
        <tissue>Root</tissue>
    </source>
</reference>
<reference key="6">
    <citation type="journal article" date="2009" name="J. Proteomics">
        <title>Phosphoproteomic analysis of nuclei-enriched fractions from Arabidopsis thaliana.</title>
        <authorList>
            <person name="Jones A.M.E."/>
            <person name="MacLean D."/>
            <person name="Studholme D.J."/>
            <person name="Serna-Sanz A."/>
            <person name="Andreasson E."/>
            <person name="Rathjen J.P."/>
            <person name="Peck S.C."/>
        </authorList>
    </citation>
    <scope>PHOSPHORYLATION [LARGE SCALE ANALYSIS] AT SER-911</scope>
    <scope>IDENTIFICATION BY MASS SPECTROMETRY [LARGE SCALE ANALYSIS]</scope>
    <source>
        <strain>cv. Columbia</strain>
    </source>
</reference>
<reference key="7">
    <citation type="journal article" date="2009" name="Plant Physiol.">
        <title>Large-scale Arabidopsis phosphoproteome profiling reveals novel chloroplast kinase substrates and phosphorylation networks.</title>
        <authorList>
            <person name="Reiland S."/>
            <person name="Messerli G."/>
            <person name="Baerenfaller K."/>
            <person name="Gerrits B."/>
            <person name="Endler A."/>
            <person name="Grossmann J."/>
            <person name="Gruissem W."/>
            <person name="Baginsky S."/>
        </authorList>
    </citation>
    <scope>PHOSPHORYLATION [LARGE SCALE ANALYSIS] AT SER-911</scope>
    <scope>IDENTIFICATION BY MASS SPECTROMETRY [LARGE SCALE ANALYSIS]</scope>
</reference>
<reference key="8">
    <citation type="journal article" date="2010" name="Plant Cell Physiol.">
        <title>MAG4/Atp115 is a golgi-localized tethering factor that mediates efficient anterograde transport in Arabidopsis.</title>
        <authorList>
            <person name="Takahashi H."/>
            <person name="Tamura K."/>
            <person name="Takagi J."/>
            <person name="Koumoto Y."/>
            <person name="Hara-Nishimura I."/>
            <person name="Shimada T."/>
        </authorList>
    </citation>
    <scope>FUNCTION</scope>
    <scope>SUBCELLULAR LOCATION</scope>
    <scope>DISRUPTION PHENOTYPE</scope>
    <scope>DOMAIN</scope>
</reference>
<accession>B0F9L4</accession>
<accession>Q940C3</accession>
<accession>Q9LT59</accession>
<gene>
    <name type="primary">GC6</name>
    <name evidence="4" type="synonym">MAG4</name>
    <name type="ordered locus">At3g27530</name>
    <name type="ORF">MMJ24.8</name>
    <name type="ORF">MMJ24_7</name>
</gene>
<sequence>MDLASRYKGVVGMVFGDNQSSNEDSYIQRLLDRISNGTLPDDRRTAIVELQSVVAESNAAQLAFGAAGFPVIVGILKDQRDDLEMVRGALETLLGALTPIDHARAQKTEVQAALMNSDLLSREAENITLLLSLLEEEDFYVRYYTLQILTALLMNSQNRLQEAILTTPRGITRLMDMLMDREVIRNEALLLLTHLTREAEEIQKIVVFEGAFEKIFSIIKEEGGSDGDVVVQDCLELLNNLLRSSSSNQILLRETMGFEPIISILKLRGITYKFTQQKTVNLLSALETINMLIMGRADTEPGKDSNKLANRTVLVQKKLLDYLLMLGVESQWAPVAVRCMTFKCIGDLIDGHPKNRDILASKVLGEDRQVEPALNSILRIILQTSSIQEFVAADYVFKTFCEKNTEGQTMLASTLIPQPHPTSRDHLEDDVHMSFGSMLLRGLCSGEADGDLETCCRAASILSHVVKDNLRCKEKALKIVLESPMPSMGTPEPLFQRIVRYLAVASSMKSKEKSSTLGKSYIQQIILKLLVTWTVDCPTAVQCFLDSRHHLTFLLELVTDPAATVCIRGLASILLGECVIYNKSIENGKDAFSVVDAVGQKMGLTSYFSKFEEMQNSFIFSPSKKPPQGYKPLTRTPTPSEAEINEVDEVDEMVKGNEDHPMLLSLFDASFIGLVKSLEGNIRERIVDVYSRPKSEVAVVPADLEQKSGENEKDYINRLKAFIEKQCSEIQNLLARNAALAEDVASSGRNEQSQGSEQRASTVMDKVQMESIRRELQETSQRLETVKAEKAKIESEASSNKNMAAKLEFDLKSLSDAYNSLEQANYHLEQEVKSLKGGESPMQFPDIEAIKEEVRKEAQKESEDELNDLLVCLGQEESKVEKLSAKLIELGVDVDKLLEDIGDESEAQAESEED</sequence>
<feature type="chain" id="PRO_0000348540" description="Golgin candidate 6">
    <location>
        <begin position="1"/>
        <end position="914"/>
    </location>
</feature>
<feature type="coiled-coil region" evidence="1">
    <location>
        <begin position="723"/>
        <end position="837"/>
    </location>
</feature>
<feature type="coiled-coil region" evidence="1">
    <location>
        <begin position="863"/>
        <end position="901"/>
    </location>
</feature>
<feature type="modified residue" description="Phosphoserine" evidence="6 7 8">
    <location>
        <position position="911"/>
    </location>
</feature>
<feature type="sequence conflict" description="In Ref. 1; ABY67247." evidence="5" ref="1">
    <original>L</original>
    <variation>V</variation>
    <location>
        <position position="93"/>
    </location>
</feature>
<feature type="sequence conflict" description="In Ref. 1; ABY67247." evidence="5" ref="1">
    <original>Q</original>
    <variation>H</variation>
    <location>
        <position position="111"/>
    </location>
</feature>
<feature type="sequence conflict" description="In Ref. 1; ABY67247." evidence="5" ref="1">
    <original>R</original>
    <variation>G</variation>
    <location>
        <position position="296"/>
    </location>
</feature>
<feature type="sequence conflict" description="In Ref. 1; ABY67247." evidence="5" ref="1">
    <original>H</original>
    <variation>P</variation>
    <location>
        <position position="426"/>
    </location>
</feature>
<feature type="sequence conflict" description="In Ref. 1; ABY67247." evidence="5" ref="1">
    <original>M</original>
    <variation>I</variation>
    <location>
        <position position="508"/>
    </location>
</feature>
<feature type="sequence conflict" description="In Ref. 1; ABY67247." evidence="5" ref="1">
    <original>T</original>
    <variation>A</variation>
    <location>
        <position position="539"/>
    </location>
</feature>
<feature type="sequence conflict" description="In Ref. 1; ABY67247." evidence="5" ref="1">
    <original>K</original>
    <variation>I</variation>
    <location>
        <position position="713"/>
    </location>
</feature>
<feature type="sequence conflict" description="In Ref. 1; ABY67247." evidence="5" ref="1">
    <original>S</original>
    <variation>P</variation>
    <location>
        <position position="753"/>
    </location>
</feature>
<feature type="sequence conflict" description="In Ref. 1; ABY67247." evidence="5" ref="1">
    <original>N</original>
    <variation>Y</variation>
    <location>
        <position position="800"/>
    </location>
</feature>
<dbReference type="EMBL" id="EU249327">
    <property type="protein sequence ID" value="ABY67247.1"/>
    <property type="molecule type" value="mRNA"/>
</dbReference>
<dbReference type="EMBL" id="AB025626">
    <property type="protein sequence ID" value="BAB01283.1"/>
    <property type="status" value="ALT_SEQ"/>
    <property type="molecule type" value="Genomic_DNA"/>
</dbReference>
<dbReference type="EMBL" id="CP002686">
    <property type="protein sequence ID" value="AEE77334.1"/>
    <property type="molecule type" value="Genomic_DNA"/>
</dbReference>
<dbReference type="EMBL" id="AY056118">
    <property type="protein sequence ID" value="AAL07004.1"/>
    <property type="status" value="ALT_FRAME"/>
    <property type="molecule type" value="mRNA"/>
</dbReference>
<dbReference type="EMBL" id="BT001017">
    <property type="protein sequence ID" value="AAN46771.1"/>
    <property type="molecule type" value="mRNA"/>
</dbReference>
<dbReference type="RefSeq" id="NP_566820.1">
    <property type="nucleotide sequence ID" value="NM_113669.3"/>
</dbReference>
<dbReference type="SMR" id="B0F9L4"/>
<dbReference type="BioGRID" id="7705">
    <property type="interactions" value="2"/>
</dbReference>
<dbReference type="FunCoup" id="B0F9L4">
    <property type="interactions" value="4845"/>
</dbReference>
<dbReference type="STRING" id="3702.B0F9L4"/>
<dbReference type="GlyGen" id="B0F9L4">
    <property type="glycosylation" value="1 site"/>
</dbReference>
<dbReference type="iPTMnet" id="B0F9L4"/>
<dbReference type="PaxDb" id="3702-AT3G27530.1"/>
<dbReference type="ProteomicsDB" id="248453"/>
<dbReference type="EnsemblPlants" id="AT3G27530.1">
    <property type="protein sequence ID" value="AT3G27530.1"/>
    <property type="gene ID" value="AT3G27530"/>
</dbReference>
<dbReference type="GeneID" id="822375"/>
<dbReference type="Gramene" id="AT3G27530.1">
    <property type="protein sequence ID" value="AT3G27530.1"/>
    <property type="gene ID" value="AT3G27530"/>
</dbReference>
<dbReference type="KEGG" id="ath:AT3G27530"/>
<dbReference type="Araport" id="AT3G27530"/>
<dbReference type="TAIR" id="AT3G27530">
    <property type="gene designation" value="GC6"/>
</dbReference>
<dbReference type="eggNOG" id="KOG0946">
    <property type="taxonomic scope" value="Eukaryota"/>
</dbReference>
<dbReference type="HOGENOM" id="CLU_006318_3_0_1"/>
<dbReference type="InParanoid" id="B0F9L4"/>
<dbReference type="OMA" id="GQETFCN"/>
<dbReference type="PhylomeDB" id="B0F9L4"/>
<dbReference type="PRO" id="PR:B0F9L4"/>
<dbReference type="Proteomes" id="UP000006548">
    <property type="component" value="Chromosome 3"/>
</dbReference>
<dbReference type="ExpressionAtlas" id="B0F9L4">
    <property type="expression patterns" value="baseline and differential"/>
</dbReference>
<dbReference type="GO" id="GO:0005829">
    <property type="term" value="C:cytosol"/>
    <property type="evidence" value="ECO:0007005"/>
    <property type="project" value="TAIR"/>
</dbReference>
<dbReference type="GO" id="GO:0005794">
    <property type="term" value="C:Golgi apparatus"/>
    <property type="evidence" value="ECO:0000314"/>
    <property type="project" value="TAIR"/>
</dbReference>
<dbReference type="GO" id="GO:0000139">
    <property type="term" value="C:Golgi membrane"/>
    <property type="evidence" value="ECO:0007669"/>
    <property type="project" value="InterPro"/>
</dbReference>
<dbReference type="GO" id="GO:0005795">
    <property type="term" value="C:Golgi stack"/>
    <property type="evidence" value="ECO:0000314"/>
    <property type="project" value="TAIR"/>
</dbReference>
<dbReference type="GO" id="GO:0009791">
    <property type="term" value="P:post-embryonic development"/>
    <property type="evidence" value="ECO:0000315"/>
    <property type="project" value="TAIR"/>
</dbReference>
<dbReference type="GO" id="GO:0032527">
    <property type="term" value="P:protein exit from endoplasmic reticulum"/>
    <property type="evidence" value="ECO:0000315"/>
    <property type="project" value="TAIR"/>
</dbReference>
<dbReference type="GO" id="GO:0048280">
    <property type="term" value="P:vesicle fusion with Golgi apparatus"/>
    <property type="evidence" value="ECO:0007669"/>
    <property type="project" value="InterPro"/>
</dbReference>
<dbReference type="FunFam" id="1.25.10.10:FF:000234">
    <property type="entry name" value="Golgin candidate 6"/>
    <property type="match status" value="1"/>
</dbReference>
<dbReference type="Gene3D" id="1.25.10.10">
    <property type="entry name" value="Leucine-rich Repeat Variant"/>
    <property type="match status" value="1"/>
</dbReference>
<dbReference type="InterPro" id="IPR011989">
    <property type="entry name" value="ARM-like"/>
</dbReference>
<dbReference type="InterPro" id="IPR016024">
    <property type="entry name" value="ARM-type_fold"/>
</dbReference>
<dbReference type="InterPro" id="IPR006955">
    <property type="entry name" value="Uso1_p115_C"/>
</dbReference>
<dbReference type="InterPro" id="IPR024095">
    <property type="entry name" value="Vesicle_P115"/>
</dbReference>
<dbReference type="InterPro" id="IPR006953">
    <property type="entry name" value="Vesicle_Uso1_P115_head"/>
</dbReference>
<dbReference type="PANTHER" id="PTHR10013">
    <property type="entry name" value="GENERAL VESICULAR TRANSPORT FACTOR P115"/>
    <property type="match status" value="1"/>
</dbReference>
<dbReference type="PANTHER" id="PTHR10013:SF0">
    <property type="entry name" value="GENERAL VESICULAR TRANSPORT FACTOR P115"/>
    <property type="match status" value="1"/>
</dbReference>
<dbReference type="Pfam" id="PF04871">
    <property type="entry name" value="Uso1_p115_C"/>
    <property type="match status" value="1"/>
</dbReference>
<dbReference type="Pfam" id="PF04869">
    <property type="entry name" value="Uso1_p115_head"/>
    <property type="match status" value="1"/>
</dbReference>
<dbReference type="SUPFAM" id="SSF48371">
    <property type="entry name" value="ARM repeat"/>
    <property type="match status" value="1"/>
</dbReference>
<comment type="function">
    <text evidence="3">Golgi matrix protein playing a role in tethering of vesicles to Golgi membranes and in maintaining the overall structure of the Golgi apparatus. Functions in the anterograde transport of storage protein precursors from the endoplasmic reticulum (ER) to the Golgi complex.</text>
</comment>
<comment type="subcellular location">
    <subcellularLocation>
        <location evidence="2">Golgi apparatus</location>
    </subcellularLocation>
    <subcellularLocation>
        <location evidence="3">Golgi apparatus</location>
        <location evidence="3">Golgi stack</location>
    </subcellularLocation>
    <text evidence="2">Concentrates only on one side of the Golgi bodies.</text>
</comment>
<comment type="domain">
    <text evidence="2">The C-terminal domain (689-914) is necessary and sufficient for Golgi targeting.</text>
</comment>
<comment type="disruption phenotype">
    <text evidence="3">Dwarf plants and accumulation of the precursors of the two major storage proteins albumin 2S and globulin 12S in dry seeds.</text>
</comment>
<comment type="sequence caution" evidence="5">
    <conflict type="frameshift">
        <sequence resource="EMBL-CDS" id="AAL07004"/>
    </conflict>
</comment>
<comment type="sequence caution" evidence="5">
    <conflict type="erroneous gene model prediction">
        <sequence resource="EMBL-CDS" id="BAB01283"/>
    </conflict>
</comment>
<organism>
    <name type="scientific">Arabidopsis thaliana</name>
    <name type="common">Mouse-ear cress</name>
    <dbReference type="NCBI Taxonomy" id="3702"/>
    <lineage>
        <taxon>Eukaryota</taxon>
        <taxon>Viridiplantae</taxon>
        <taxon>Streptophyta</taxon>
        <taxon>Embryophyta</taxon>
        <taxon>Tracheophyta</taxon>
        <taxon>Spermatophyta</taxon>
        <taxon>Magnoliopsida</taxon>
        <taxon>eudicotyledons</taxon>
        <taxon>Gunneridae</taxon>
        <taxon>Pentapetalae</taxon>
        <taxon>rosids</taxon>
        <taxon>malvids</taxon>
        <taxon>Brassicales</taxon>
        <taxon>Brassicaceae</taxon>
        <taxon>Camelineae</taxon>
        <taxon>Arabidopsis</taxon>
    </lineage>
</organism>
<proteinExistence type="evidence at protein level"/>
<evidence type="ECO:0000255" key="1"/>
<evidence type="ECO:0000269" key="2">
    <source>
    </source>
</evidence>
<evidence type="ECO:0000269" key="3">
    <source>
    </source>
</evidence>
<evidence type="ECO:0000303" key="4">
    <source>
    </source>
</evidence>
<evidence type="ECO:0000305" key="5"/>
<evidence type="ECO:0007744" key="6">
    <source>
    </source>
</evidence>
<evidence type="ECO:0007744" key="7">
    <source>
    </source>
</evidence>
<evidence type="ECO:0007744" key="8">
    <source>
    </source>
</evidence>
<protein>
    <recommendedName>
        <fullName>Golgin candidate 6</fullName>
        <shortName>AtGC6</shortName>
    </recommendedName>
    <alternativeName>
        <fullName evidence="4">Protein MAIGO 4</fullName>
    </alternativeName>
</protein>
<name>GOGC6_ARATH</name>
<keyword id="KW-0175">Coiled coil</keyword>
<keyword id="KW-0333">Golgi apparatus</keyword>
<keyword id="KW-0597">Phosphoprotein</keyword>
<keyword id="KW-0653">Protein transport</keyword>
<keyword id="KW-1185">Reference proteome</keyword>
<keyword id="KW-0813">Transport</keyword>